<accession>A2YPX3</accession>
<accession>O22441</accession>
<accession>P37835</accession>
<accession>Q7F1U3</accession>
<name>PER2_ORYSI</name>
<organism>
    <name type="scientific">Oryza sativa subsp. indica</name>
    <name type="common">Rice</name>
    <dbReference type="NCBI Taxonomy" id="39946"/>
    <lineage>
        <taxon>Eukaryota</taxon>
        <taxon>Viridiplantae</taxon>
        <taxon>Streptophyta</taxon>
        <taxon>Embryophyta</taxon>
        <taxon>Tracheophyta</taxon>
        <taxon>Spermatophyta</taxon>
        <taxon>Magnoliopsida</taxon>
        <taxon>Liliopsida</taxon>
        <taxon>Poales</taxon>
        <taxon>Poaceae</taxon>
        <taxon>BOP clade</taxon>
        <taxon>Oryzoideae</taxon>
        <taxon>Oryzeae</taxon>
        <taxon>Oryzinae</taxon>
        <taxon>Oryza</taxon>
        <taxon>Oryza sativa</taxon>
    </lineage>
</organism>
<proteinExistence type="inferred from homology"/>
<gene>
    <name type="primary">PRX112</name>
    <name type="synonym">POXGX9</name>
    <name type="ORF">OsI_026366</name>
</gene>
<keyword id="KW-0106">Calcium</keyword>
<keyword id="KW-1015">Disulfide bond</keyword>
<keyword id="KW-0325">Glycoprotein</keyword>
<keyword id="KW-0349">Heme</keyword>
<keyword id="KW-0376">Hydrogen peroxide</keyword>
<keyword id="KW-0408">Iron</keyword>
<keyword id="KW-0479">Metal-binding</keyword>
<keyword id="KW-0560">Oxidoreductase</keyword>
<keyword id="KW-0575">Peroxidase</keyword>
<keyword id="KW-0873">Pyrrolidone carboxylic acid</keyword>
<keyword id="KW-1185">Reference proteome</keyword>
<keyword id="KW-0964">Secreted</keyword>
<keyword id="KW-0732">Signal</keyword>
<protein>
    <recommendedName>
        <fullName>Peroxidase 2</fullName>
        <ecNumber>1.11.1.7</ecNumber>
    </recommendedName>
</protein>
<evidence type="ECO:0000255" key="1"/>
<evidence type="ECO:0000255" key="2">
    <source>
        <dbReference type="PROSITE-ProRule" id="PRU00297"/>
    </source>
</evidence>
<evidence type="ECO:0000255" key="3">
    <source>
        <dbReference type="PROSITE-ProRule" id="PRU10012"/>
    </source>
</evidence>
<feature type="signal peptide" evidence="1">
    <location>
        <begin position="1"/>
        <end position="23"/>
    </location>
</feature>
<feature type="chain" id="PRO_0000300259" description="Peroxidase 2">
    <location>
        <begin position="24"/>
        <end position="314"/>
    </location>
</feature>
<feature type="active site" description="Proton acceptor" evidence="2 3">
    <location>
        <position position="65"/>
    </location>
</feature>
<feature type="binding site" evidence="2">
    <location>
        <position position="66"/>
    </location>
    <ligand>
        <name>Ca(2+)</name>
        <dbReference type="ChEBI" id="CHEBI:29108"/>
        <label>1</label>
    </ligand>
</feature>
<feature type="binding site" evidence="2">
    <location>
        <position position="69"/>
    </location>
    <ligand>
        <name>Ca(2+)</name>
        <dbReference type="ChEBI" id="CHEBI:29108"/>
        <label>1</label>
    </ligand>
</feature>
<feature type="binding site" evidence="2">
    <location>
        <position position="71"/>
    </location>
    <ligand>
        <name>Ca(2+)</name>
        <dbReference type="ChEBI" id="CHEBI:29108"/>
        <label>1</label>
    </ligand>
</feature>
<feature type="binding site" evidence="2">
    <location>
        <position position="73"/>
    </location>
    <ligand>
        <name>Ca(2+)</name>
        <dbReference type="ChEBI" id="CHEBI:29108"/>
        <label>1</label>
    </ligand>
</feature>
<feature type="binding site" evidence="2">
    <location>
        <position position="75"/>
    </location>
    <ligand>
        <name>Ca(2+)</name>
        <dbReference type="ChEBI" id="CHEBI:29108"/>
        <label>1</label>
    </ligand>
</feature>
<feature type="binding site" evidence="2">
    <location>
        <position position="157"/>
    </location>
    <ligand>
        <name>substrate</name>
    </ligand>
</feature>
<feature type="binding site" description="axial binding residue" evidence="2">
    <location>
        <position position="187"/>
    </location>
    <ligand>
        <name>heme b</name>
        <dbReference type="ChEBI" id="CHEBI:60344"/>
    </ligand>
    <ligandPart>
        <name>Fe</name>
        <dbReference type="ChEBI" id="CHEBI:18248"/>
    </ligandPart>
</feature>
<feature type="binding site" evidence="2">
    <location>
        <position position="188"/>
    </location>
    <ligand>
        <name>Ca(2+)</name>
        <dbReference type="ChEBI" id="CHEBI:29108"/>
        <label>2</label>
    </ligand>
</feature>
<feature type="binding site" evidence="2">
    <location>
        <position position="234"/>
    </location>
    <ligand>
        <name>Ca(2+)</name>
        <dbReference type="ChEBI" id="CHEBI:29108"/>
        <label>2</label>
    </ligand>
</feature>
<feature type="binding site" evidence="2">
    <location>
        <position position="237"/>
    </location>
    <ligand>
        <name>Ca(2+)</name>
        <dbReference type="ChEBI" id="CHEBI:29108"/>
        <label>2</label>
    </ligand>
</feature>
<feature type="binding site" evidence="2">
    <location>
        <position position="242"/>
    </location>
    <ligand>
        <name>Ca(2+)</name>
        <dbReference type="ChEBI" id="CHEBI:29108"/>
        <label>2</label>
    </ligand>
</feature>
<feature type="site" description="Transition state stabilizer" evidence="2">
    <location>
        <position position="61"/>
    </location>
</feature>
<feature type="modified residue" description="Pyrrolidone carboxylic acid" evidence="2">
    <location>
        <position position="24"/>
    </location>
</feature>
<feature type="glycosylation site" description="N-linked (GlcNAc...) asparagine" evidence="1">
    <location>
        <position position="148"/>
    </location>
</feature>
<feature type="glycosylation site" description="N-linked (GlcNAc...) asparagine" evidence="1">
    <location>
        <position position="169"/>
    </location>
</feature>
<feature type="glycosylation site" description="N-linked (GlcNAc...) asparagine" evidence="1">
    <location>
        <position position="203"/>
    </location>
</feature>
<feature type="glycosylation site" description="N-linked (GlcNAc...) asparagine" evidence="1">
    <location>
        <position position="274"/>
    </location>
</feature>
<feature type="glycosylation site" description="N-linked (GlcNAc...) asparagine" evidence="1">
    <location>
        <position position="309"/>
    </location>
</feature>
<feature type="disulfide bond" evidence="2">
    <location>
        <begin position="34"/>
        <end position="109"/>
    </location>
</feature>
<feature type="disulfide bond" evidence="2">
    <location>
        <begin position="67"/>
        <end position="72"/>
    </location>
</feature>
<feature type="disulfide bond" evidence="2">
    <location>
        <begin position="115"/>
        <end position="310"/>
    </location>
</feature>
<feature type="disulfide bond" evidence="2">
    <location>
        <begin position="194"/>
        <end position="219"/>
    </location>
</feature>
<dbReference type="EC" id="1.11.1.7"/>
<dbReference type="EMBL" id="AF014470">
    <property type="protein sequence ID" value="AAC49821.1"/>
    <property type="molecule type" value="Genomic_DNA"/>
</dbReference>
<dbReference type="EMBL" id="CM000132">
    <property type="status" value="NOT_ANNOTATED_CDS"/>
    <property type="molecule type" value="Genomic_DNA"/>
</dbReference>
<dbReference type="SMR" id="A2YPX3"/>
<dbReference type="STRING" id="39946.A2YPX3"/>
<dbReference type="GlyCosmos" id="A2YPX3">
    <property type="glycosylation" value="5 sites, No reported glycans"/>
</dbReference>
<dbReference type="EnsemblPlants" id="BGIOSGA026390-TA">
    <property type="protein sequence ID" value="BGIOSGA026390-PA"/>
    <property type="gene ID" value="BGIOSGA026390"/>
</dbReference>
<dbReference type="Gramene" id="BGIOSGA026390-TA">
    <property type="protein sequence ID" value="BGIOSGA026390-PA"/>
    <property type="gene ID" value="BGIOSGA026390"/>
</dbReference>
<dbReference type="HOGENOM" id="CLU_010543_0_0_1"/>
<dbReference type="OMA" id="QARCAFF"/>
<dbReference type="Proteomes" id="UP000007015">
    <property type="component" value="Chromosome 7"/>
</dbReference>
<dbReference type="ExpressionAtlas" id="A2YPX3">
    <property type="expression patterns" value="differential"/>
</dbReference>
<dbReference type="GO" id="GO:0005576">
    <property type="term" value="C:extracellular region"/>
    <property type="evidence" value="ECO:0007669"/>
    <property type="project" value="UniProtKB-SubCell"/>
</dbReference>
<dbReference type="GO" id="GO:0020037">
    <property type="term" value="F:heme binding"/>
    <property type="evidence" value="ECO:0007669"/>
    <property type="project" value="InterPro"/>
</dbReference>
<dbReference type="GO" id="GO:0140825">
    <property type="term" value="F:lactoperoxidase activity"/>
    <property type="evidence" value="ECO:0007669"/>
    <property type="project" value="UniProtKB-EC"/>
</dbReference>
<dbReference type="GO" id="GO:0046872">
    <property type="term" value="F:metal ion binding"/>
    <property type="evidence" value="ECO:0007669"/>
    <property type="project" value="UniProtKB-KW"/>
</dbReference>
<dbReference type="GO" id="GO:0042744">
    <property type="term" value="P:hydrogen peroxide catabolic process"/>
    <property type="evidence" value="ECO:0007669"/>
    <property type="project" value="UniProtKB-KW"/>
</dbReference>
<dbReference type="GO" id="GO:0006979">
    <property type="term" value="P:response to oxidative stress"/>
    <property type="evidence" value="ECO:0007669"/>
    <property type="project" value="InterPro"/>
</dbReference>
<dbReference type="CDD" id="cd00693">
    <property type="entry name" value="secretory_peroxidase"/>
    <property type="match status" value="1"/>
</dbReference>
<dbReference type="FunFam" id="1.10.420.10:FF:000001">
    <property type="entry name" value="Peroxidase"/>
    <property type="match status" value="1"/>
</dbReference>
<dbReference type="FunFam" id="1.10.520.10:FF:000009">
    <property type="entry name" value="Peroxidase"/>
    <property type="match status" value="1"/>
</dbReference>
<dbReference type="Gene3D" id="1.10.520.10">
    <property type="match status" value="1"/>
</dbReference>
<dbReference type="Gene3D" id="1.10.420.10">
    <property type="entry name" value="Peroxidase, domain 2"/>
    <property type="match status" value="1"/>
</dbReference>
<dbReference type="InterPro" id="IPR002016">
    <property type="entry name" value="Haem_peroxidase"/>
</dbReference>
<dbReference type="InterPro" id="IPR010255">
    <property type="entry name" value="Haem_peroxidase_sf"/>
</dbReference>
<dbReference type="InterPro" id="IPR000823">
    <property type="entry name" value="Peroxidase_pln"/>
</dbReference>
<dbReference type="InterPro" id="IPR019794">
    <property type="entry name" value="Peroxidases_AS"/>
</dbReference>
<dbReference type="InterPro" id="IPR019793">
    <property type="entry name" value="Peroxidases_heam-ligand_BS"/>
</dbReference>
<dbReference type="InterPro" id="IPR033905">
    <property type="entry name" value="Secretory_peroxidase"/>
</dbReference>
<dbReference type="PANTHER" id="PTHR31388:SF13">
    <property type="entry name" value="PEROXIDASE 2"/>
    <property type="match status" value="1"/>
</dbReference>
<dbReference type="PANTHER" id="PTHR31388">
    <property type="entry name" value="PEROXIDASE 72-RELATED"/>
    <property type="match status" value="1"/>
</dbReference>
<dbReference type="Pfam" id="PF00141">
    <property type="entry name" value="peroxidase"/>
    <property type="match status" value="1"/>
</dbReference>
<dbReference type="PRINTS" id="PR00458">
    <property type="entry name" value="PEROXIDASE"/>
</dbReference>
<dbReference type="PRINTS" id="PR00461">
    <property type="entry name" value="PLPEROXIDASE"/>
</dbReference>
<dbReference type="SUPFAM" id="SSF48113">
    <property type="entry name" value="Heme-dependent peroxidases"/>
    <property type="match status" value="1"/>
</dbReference>
<dbReference type="PROSITE" id="PS00435">
    <property type="entry name" value="PEROXIDASE_1"/>
    <property type="match status" value="1"/>
</dbReference>
<dbReference type="PROSITE" id="PS00436">
    <property type="entry name" value="PEROXIDASE_2"/>
    <property type="match status" value="1"/>
</dbReference>
<dbReference type="PROSITE" id="PS50873">
    <property type="entry name" value="PEROXIDASE_4"/>
    <property type="match status" value="1"/>
</dbReference>
<sequence length="314" mass="32634">MASASSVSLMLLVAAAMASAASAQLSATFYDTSCPNALSTIKSAVTAAVNSEPRMGASLVRLHFHDCFVQGCDASVLLSGQEQNAGPNAGSLRGFNVVDNIKTQVEAICSQTVSCADILAVAARDSVVALGGPSWTVLLGRRDSTTANESQANTDLPAPSSSLAELIGNFSRKGLDVTDMVALSGAHTIGQAQCQNFRDRLYNETNIDSSFATALKANCPRPTGSGDSNLAPLDTTTPNAFDSAYYTNLLSNKGLLHSDQVLFNGGSTDNTVRNFSSNTAAFNSAFTVAMVKMGNISPLTGTQGQIRLNCSKVN</sequence>
<reference key="1">
    <citation type="journal article" date="1997" name="Mol. Plant Microbe Interact.">
        <title>Differential induction of a peroxidase gene family during infection of rice by Xanthomonas oryzae pv. oryzae.</title>
        <authorList>
            <person name="Chittoor J.M."/>
            <person name="Leach J.E."/>
            <person name="White F.F."/>
        </authorList>
    </citation>
    <scope>NUCLEOTIDE SEQUENCE [GENOMIC DNA]</scope>
    <source>
        <strain>cv. IRBB10</strain>
    </source>
</reference>
<reference key="2">
    <citation type="journal article" date="2005" name="PLoS Biol.">
        <title>The genomes of Oryza sativa: a history of duplications.</title>
        <authorList>
            <person name="Yu J."/>
            <person name="Wang J."/>
            <person name="Lin W."/>
            <person name="Li S."/>
            <person name="Li H."/>
            <person name="Zhou J."/>
            <person name="Ni P."/>
            <person name="Dong W."/>
            <person name="Hu S."/>
            <person name="Zeng C."/>
            <person name="Zhang J."/>
            <person name="Zhang Y."/>
            <person name="Li R."/>
            <person name="Xu Z."/>
            <person name="Li S."/>
            <person name="Li X."/>
            <person name="Zheng H."/>
            <person name="Cong L."/>
            <person name="Lin L."/>
            <person name="Yin J."/>
            <person name="Geng J."/>
            <person name="Li G."/>
            <person name="Shi J."/>
            <person name="Liu J."/>
            <person name="Lv H."/>
            <person name="Li J."/>
            <person name="Wang J."/>
            <person name="Deng Y."/>
            <person name="Ran L."/>
            <person name="Shi X."/>
            <person name="Wang X."/>
            <person name="Wu Q."/>
            <person name="Li C."/>
            <person name="Ren X."/>
            <person name="Wang J."/>
            <person name="Wang X."/>
            <person name="Li D."/>
            <person name="Liu D."/>
            <person name="Zhang X."/>
            <person name="Ji Z."/>
            <person name="Zhao W."/>
            <person name="Sun Y."/>
            <person name="Zhang Z."/>
            <person name="Bao J."/>
            <person name="Han Y."/>
            <person name="Dong L."/>
            <person name="Ji J."/>
            <person name="Chen P."/>
            <person name="Wu S."/>
            <person name="Liu J."/>
            <person name="Xiao Y."/>
            <person name="Bu D."/>
            <person name="Tan J."/>
            <person name="Yang L."/>
            <person name="Ye C."/>
            <person name="Zhang J."/>
            <person name="Xu J."/>
            <person name="Zhou Y."/>
            <person name="Yu Y."/>
            <person name="Zhang B."/>
            <person name="Zhuang S."/>
            <person name="Wei H."/>
            <person name="Liu B."/>
            <person name="Lei M."/>
            <person name="Yu H."/>
            <person name="Li Y."/>
            <person name="Xu H."/>
            <person name="Wei S."/>
            <person name="He X."/>
            <person name="Fang L."/>
            <person name="Zhang Z."/>
            <person name="Zhang Y."/>
            <person name="Huang X."/>
            <person name="Su Z."/>
            <person name="Tong W."/>
            <person name="Li J."/>
            <person name="Tong Z."/>
            <person name="Li S."/>
            <person name="Ye J."/>
            <person name="Wang L."/>
            <person name="Fang L."/>
            <person name="Lei T."/>
            <person name="Chen C.-S."/>
            <person name="Chen H.-C."/>
            <person name="Xu Z."/>
            <person name="Li H."/>
            <person name="Huang H."/>
            <person name="Zhang F."/>
            <person name="Xu H."/>
            <person name="Li N."/>
            <person name="Zhao C."/>
            <person name="Li S."/>
            <person name="Dong L."/>
            <person name="Huang Y."/>
            <person name="Li L."/>
            <person name="Xi Y."/>
            <person name="Qi Q."/>
            <person name="Li W."/>
            <person name="Zhang B."/>
            <person name="Hu W."/>
            <person name="Zhang Y."/>
            <person name="Tian X."/>
            <person name="Jiao Y."/>
            <person name="Liang X."/>
            <person name="Jin J."/>
            <person name="Gao L."/>
            <person name="Zheng W."/>
            <person name="Hao B."/>
            <person name="Liu S.-M."/>
            <person name="Wang W."/>
            <person name="Yuan L."/>
            <person name="Cao M."/>
            <person name="McDermott J."/>
            <person name="Samudrala R."/>
            <person name="Wang J."/>
            <person name="Wong G.K.-S."/>
            <person name="Yang H."/>
        </authorList>
    </citation>
    <scope>NUCLEOTIDE SEQUENCE [LARGE SCALE GENOMIC DNA]</scope>
    <source>
        <strain>cv. 93-11</strain>
    </source>
</reference>
<comment type="function">
    <text>Removal of H(2)O(2), oxidation of toxic reductants, biosynthesis and degradation of lignin, suberization, auxin catabolism, response to environmental stresses such as wounding, pathogen attack and oxidative stress. These functions might be dependent on each isozyme/isoform in each plant tissue.</text>
</comment>
<comment type="catalytic activity">
    <reaction>
        <text>2 a phenolic donor + H2O2 = 2 a phenolic radical donor + 2 H2O</text>
        <dbReference type="Rhea" id="RHEA:56136"/>
        <dbReference type="ChEBI" id="CHEBI:15377"/>
        <dbReference type="ChEBI" id="CHEBI:16240"/>
        <dbReference type="ChEBI" id="CHEBI:139520"/>
        <dbReference type="ChEBI" id="CHEBI:139521"/>
        <dbReference type="EC" id="1.11.1.7"/>
    </reaction>
</comment>
<comment type="cofactor">
    <cofactor>
        <name>Ca(2+)</name>
        <dbReference type="ChEBI" id="CHEBI:29108"/>
    </cofactor>
    <text>Binds 2 calcium ions per subunit.</text>
</comment>
<comment type="cofactor">
    <cofactor>
        <name>heme b</name>
        <dbReference type="ChEBI" id="CHEBI:60344"/>
    </cofactor>
    <text>Binds 1 heme b (iron(II)-protoporphyrin IX) group per subunit.</text>
</comment>
<comment type="subcellular location">
    <subcellularLocation>
        <location evidence="2">Secreted</location>
    </subcellularLocation>
</comment>
<comment type="similarity">
    <text evidence="2">Belongs to the peroxidase family. Classical plant (class III) peroxidase subfamily.</text>
</comment>